<comment type="function">
    <text evidence="4 5">Canalicular ectonucleoside NTPDase responsible for the main hepatic NTPDase activity. Ectonucleoside ATPases catalyze the hydrolysis of gamma- and beta-phosphate residues of nucleotides, playing a central role in concentration of extracellular nucleotides.</text>
</comment>
<comment type="catalytic activity">
    <reaction evidence="4">
        <text>a ribonucleoside 5'-triphosphate + 2 H2O = a ribonucleoside 5'-phosphate + 2 phosphate + 2 H(+)</text>
        <dbReference type="Rhea" id="RHEA:36795"/>
        <dbReference type="ChEBI" id="CHEBI:15377"/>
        <dbReference type="ChEBI" id="CHEBI:15378"/>
        <dbReference type="ChEBI" id="CHEBI:43474"/>
        <dbReference type="ChEBI" id="CHEBI:58043"/>
        <dbReference type="ChEBI" id="CHEBI:61557"/>
        <dbReference type="EC" id="3.6.1.5"/>
    </reaction>
</comment>
<comment type="cofactor">
    <cofactor evidence="1">
        <name>Ca(2+)</name>
        <dbReference type="ChEBI" id="CHEBI:29108"/>
    </cofactor>
    <cofactor evidence="1">
        <name>Mg(2+)</name>
        <dbReference type="ChEBI" id="CHEBI:18420"/>
    </cofactor>
    <text evidence="1">Ca(2+) or Mg(2+). Has lower efficiency with Mg(2+).</text>
</comment>
<comment type="biophysicochemical properties">
    <kinetics>
        <KM evidence="4">0.51 mM for ATP</KM>
        <KM evidence="4">5.3 mM for ADP</KM>
    </kinetics>
</comment>
<comment type="subcellular location">
    <subcellularLocation>
        <location evidence="4">Cell membrane</location>
        <topology evidence="4">Multi-pass membrane protein</topology>
    </subcellularLocation>
</comment>
<comment type="PTM">
    <text>N-glycosylated.</text>
</comment>
<comment type="similarity">
    <text evidence="6">Belongs to the GDA1/CD39 NTPase family.</text>
</comment>
<name>ENTP8_CHICK</name>
<evidence type="ECO:0000250" key="1"/>
<evidence type="ECO:0000250" key="2">
    <source>
        <dbReference type="UniProtKB" id="O35795"/>
    </source>
</evidence>
<evidence type="ECO:0000255" key="3"/>
<evidence type="ECO:0000269" key="4">
    <source>
    </source>
</evidence>
<evidence type="ECO:0000269" key="5">
    <source>
    </source>
</evidence>
<evidence type="ECO:0000305" key="6"/>
<keyword id="KW-0067">ATP-binding</keyword>
<keyword id="KW-0106">Calcium</keyword>
<keyword id="KW-1003">Cell membrane</keyword>
<keyword id="KW-0903">Direct protein sequencing</keyword>
<keyword id="KW-1015">Disulfide bond</keyword>
<keyword id="KW-0325">Glycoprotein</keyword>
<keyword id="KW-0378">Hydrolase</keyword>
<keyword id="KW-0460">Magnesium</keyword>
<keyword id="KW-0472">Membrane</keyword>
<keyword id="KW-0479">Metal-binding</keyword>
<keyword id="KW-0547">Nucleotide-binding</keyword>
<keyword id="KW-1185">Reference proteome</keyword>
<keyword id="KW-0812">Transmembrane</keyword>
<keyword id="KW-1133">Transmembrane helix</keyword>
<feature type="chain" id="PRO_0000209905" description="Ectonucleoside triphosphate diphosphohydrolase 8">
    <location>
        <begin position="1"/>
        <end position="493"/>
    </location>
</feature>
<feature type="topological domain" description="Cytoplasmic" evidence="3">
    <location>
        <begin position="1"/>
        <end position="7"/>
    </location>
</feature>
<feature type="transmembrane region" description="Helical" evidence="3">
    <location>
        <begin position="8"/>
        <end position="28"/>
    </location>
</feature>
<feature type="topological domain" description="Extracellular" evidence="3">
    <location>
        <begin position="29"/>
        <end position="463"/>
    </location>
</feature>
<feature type="transmembrane region" description="Helical" evidence="3">
    <location>
        <begin position="464"/>
        <end position="486"/>
    </location>
</feature>
<feature type="topological domain" description="Cytoplasmic" evidence="3">
    <location>
        <begin position="487"/>
        <end position="493"/>
    </location>
</feature>
<feature type="active site" description="Proton acceptor" evidence="2">
    <location>
        <position position="166"/>
    </location>
</feature>
<feature type="glycosylation site" description="N-linked (GlcNAc...) asparagine" evidence="3">
    <location>
        <position position="65"/>
    </location>
</feature>
<feature type="glycosylation site" description="N-linked (GlcNAc...) asparagine" evidence="3">
    <location>
        <position position="79"/>
    </location>
</feature>
<feature type="glycosylation site" description="N-linked (GlcNAc...) asparagine" evidence="3">
    <location>
        <position position="133"/>
    </location>
</feature>
<feature type="glycosylation site" description="N-linked (GlcNAc...) asparagine" evidence="3">
    <location>
        <position position="223"/>
    </location>
</feature>
<feature type="glycosylation site" description="N-linked (GlcNAc...) asparagine" evidence="3">
    <location>
        <position position="234"/>
    </location>
</feature>
<feature type="glycosylation site" description="N-linked (GlcNAc...) asparagine" evidence="3">
    <location>
        <position position="267"/>
    </location>
</feature>
<feature type="glycosylation site" description="N-linked (GlcNAc...) asparagine" evidence="3">
    <location>
        <position position="324"/>
    </location>
</feature>
<feature type="glycosylation site" description="N-linked (GlcNAc...) asparagine" evidence="3">
    <location>
        <position position="330"/>
    </location>
</feature>
<feature type="glycosylation site" description="N-linked (GlcNAc...) asparagine" evidence="3">
    <location>
        <position position="361"/>
    </location>
</feature>
<feature type="glycosylation site" description="N-linked (GlcNAc...) asparagine" evidence="3">
    <location>
        <position position="372"/>
    </location>
</feature>
<feature type="glycosylation site" description="N-linked (GlcNAc...) asparagine" evidence="3">
    <location>
        <position position="382"/>
    </location>
</feature>
<feature type="glycosylation site" description="N-linked (GlcNAc...) asparagine" evidence="3">
    <location>
        <position position="445"/>
    </location>
</feature>
<feature type="disulfide bond" evidence="1">
    <location>
        <begin position="76"/>
        <end position="100"/>
    </location>
</feature>
<feature type="disulfide bond" evidence="1">
    <location>
        <begin position="244"/>
        <end position="291"/>
    </location>
</feature>
<feature type="disulfide bond" evidence="1">
    <location>
        <begin position="327"/>
        <end position="333"/>
    </location>
</feature>
<feature type="disulfide bond" evidence="1">
    <location>
        <begin position="379"/>
        <end position="401"/>
    </location>
</feature>
<feature type="sequence conflict" description="In Ref. 3; AA sequence." evidence="6" ref="3">
    <original>C</original>
    <variation>W</variation>
    <location>
        <position position="16"/>
    </location>
</feature>
<feature type="sequence conflict" description="In Ref. 1; AA sequence." evidence="6" ref="1">
    <original>I</original>
    <variation>G</variation>
    <location>
        <position position="21"/>
    </location>
</feature>
<feature type="sequence conflict" description="In Ref. 2; AAL25086." evidence="6" ref="2">
    <original>RRI</original>
    <variation>QEN</variation>
    <location>
        <begin position="278"/>
        <end position="280"/>
    </location>
</feature>
<feature type="sequence conflict" description="In Ref. 2; AAL25086." evidence="6" ref="2">
    <original>P</original>
    <variation>R</variation>
    <location>
        <position position="316"/>
    </location>
</feature>
<feature type="sequence conflict" description="In Ref. 2; AAL25086." evidence="6" ref="2">
    <original>L</original>
    <variation>F</variation>
    <location>
        <position position="325"/>
    </location>
</feature>
<feature type="sequence conflict" description="In Ref. 2; AAL25086." evidence="6" ref="2">
    <original>HE</original>
    <variation>QQ</variation>
    <location>
        <begin position="461"/>
        <end position="462"/>
    </location>
</feature>
<organism>
    <name type="scientific">Gallus gallus</name>
    <name type="common">Chicken</name>
    <dbReference type="NCBI Taxonomy" id="9031"/>
    <lineage>
        <taxon>Eukaryota</taxon>
        <taxon>Metazoa</taxon>
        <taxon>Chordata</taxon>
        <taxon>Craniata</taxon>
        <taxon>Vertebrata</taxon>
        <taxon>Euteleostomi</taxon>
        <taxon>Archelosauria</taxon>
        <taxon>Archosauria</taxon>
        <taxon>Dinosauria</taxon>
        <taxon>Saurischia</taxon>
        <taxon>Theropoda</taxon>
        <taxon>Coelurosauria</taxon>
        <taxon>Aves</taxon>
        <taxon>Neognathae</taxon>
        <taxon>Galloanserae</taxon>
        <taxon>Galliformes</taxon>
        <taxon>Phasianidae</taxon>
        <taxon>Phasianinae</taxon>
        <taxon>Gallus</taxon>
    </lineage>
</organism>
<protein>
    <recommendedName>
        <fullName>Ectonucleoside triphosphate diphosphohydrolase 8</fullName>
        <shortName>E-NTPDase 8</shortName>
        <shortName>NTPDase 8</shortName>
        <shortName>NTPDase8</shortName>
        <ecNumber>3.6.1.5</ecNumber>
    </recommendedName>
    <alternativeName>
        <fullName>Liver ecto-ATP diphosphohydrolase</fullName>
    </alternativeName>
</protein>
<gene>
    <name type="primary">ENTPD8</name>
</gene>
<sequence length="493" mass="54035">MEYKGKVVAGLLTATCVFSIIALILSAVDVKDVFLPPGTKYGLVFDAGSTHTALYVYQWPADKENGTGIVSQVESCTVNGSGISSYADDPAGAGASLKPCLDKAMAVIPVEQQWQTPTYLGATAGMRLLREQNSTKAEQVFAEVSKAIREFPVDFRGAQILTGNEEGSFGWITVNYLLETLIKFSFAGKWEHPQNTEVLGALDLGGASTQITFQPGVTIEDKNTSVLFRLYGTNYSLYTHSYLCYGQIQASKRLMAALHQDGSYVQNISHPCYPKGYRRIITIAEIYDSPCVPTPSMLSPAQILTVTGTGNPAACPTAILKLFNLTCGANRTCGFDGVYQPPVRGQFFAFAGFYYTFSFLNLTGQQSLSHVNATVWDFCNKNWSELVETFPQNKEHLHTYCVVGLYILTLLVDGYKFDEHTWSNIHFSQKAGNADIGWTLGFMLNLTNMIPTEALEHVKGHEPSLWAGAISFIVLAIVAGLVAILLQCFWKSK</sequence>
<dbReference type="EC" id="3.6.1.5"/>
<dbReference type="EMBL" id="AF041355">
    <property type="protein sequence ID" value="AAC26491.1"/>
    <property type="molecule type" value="mRNA"/>
</dbReference>
<dbReference type="EMBL" id="AF426405">
    <property type="protein sequence ID" value="AAL25086.1"/>
    <property type="molecule type" value="mRNA"/>
</dbReference>
<dbReference type="RefSeq" id="NP_989578.2">
    <property type="nucleotide sequence ID" value="NM_204247.2"/>
</dbReference>
<dbReference type="SMR" id="O93295"/>
<dbReference type="FunCoup" id="O93295">
    <property type="interactions" value="118"/>
</dbReference>
<dbReference type="STRING" id="9031.ENSGALP00000014500"/>
<dbReference type="GlyCosmos" id="O93295">
    <property type="glycosylation" value="12 sites, No reported glycans"/>
</dbReference>
<dbReference type="GlyGen" id="O93295">
    <property type="glycosylation" value="13 sites"/>
</dbReference>
<dbReference type="PaxDb" id="9031-ENSGALP00000014500"/>
<dbReference type="GeneID" id="374095"/>
<dbReference type="KEGG" id="gga:374095"/>
<dbReference type="CTD" id="377841"/>
<dbReference type="VEuPathDB" id="HostDB:geneid_374095"/>
<dbReference type="eggNOG" id="KOG1386">
    <property type="taxonomic scope" value="Eukaryota"/>
</dbReference>
<dbReference type="InParanoid" id="O93295"/>
<dbReference type="OrthoDB" id="6372431at2759"/>
<dbReference type="PhylomeDB" id="O93295"/>
<dbReference type="BRENDA" id="3.6.1.5">
    <property type="organism ID" value="1306"/>
</dbReference>
<dbReference type="SABIO-RK" id="O93295"/>
<dbReference type="PRO" id="PR:O93295"/>
<dbReference type="Proteomes" id="UP000000539">
    <property type="component" value="Unassembled WGS sequence"/>
</dbReference>
<dbReference type="GO" id="GO:0005886">
    <property type="term" value="C:plasma membrane"/>
    <property type="evidence" value="ECO:0000318"/>
    <property type="project" value="GO_Central"/>
</dbReference>
<dbReference type="GO" id="GO:0004050">
    <property type="term" value="F:apyrase activity"/>
    <property type="evidence" value="ECO:0007669"/>
    <property type="project" value="UniProtKB-EC"/>
</dbReference>
<dbReference type="GO" id="GO:0005524">
    <property type="term" value="F:ATP binding"/>
    <property type="evidence" value="ECO:0007669"/>
    <property type="project" value="UniProtKB-KW"/>
</dbReference>
<dbReference type="GO" id="GO:0004382">
    <property type="term" value="F:GDP phosphatase activity"/>
    <property type="evidence" value="ECO:0000318"/>
    <property type="project" value="GO_Central"/>
</dbReference>
<dbReference type="GO" id="GO:0046872">
    <property type="term" value="F:metal ion binding"/>
    <property type="evidence" value="ECO:0007669"/>
    <property type="project" value="UniProtKB-KW"/>
</dbReference>
<dbReference type="GO" id="GO:0017111">
    <property type="term" value="F:ribonucleoside triphosphate phosphatase activity"/>
    <property type="evidence" value="ECO:0000318"/>
    <property type="project" value="GO_Central"/>
</dbReference>
<dbReference type="GO" id="GO:0045134">
    <property type="term" value="F:UDP phosphatase activity"/>
    <property type="evidence" value="ECO:0000318"/>
    <property type="project" value="GO_Central"/>
</dbReference>
<dbReference type="GO" id="GO:0009134">
    <property type="term" value="P:nucleoside diphosphate catabolic process"/>
    <property type="evidence" value="ECO:0000318"/>
    <property type="project" value="GO_Central"/>
</dbReference>
<dbReference type="CDD" id="cd24113">
    <property type="entry name" value="ASKHA_NBD_NTPDase8"/>
    <property type="match status" value="1"/>
</dbReference>
<dbReference type="FunFam" id="3.30.420.150:FF:000002">
    <property type="entry name" value="Ectonucleoside triphosphate diphosphohydrolase 1"/>
    <property type="match status" value="1"/>
</dbReference>
<dbReference type="FunFam" id="3.30.420.40:FF:000068">
    <property type="entry name" value="Ectonucleoside triphosphate diphosphohydrolase 1"/>
    <property type="match status" value="1"/>
</dbReference>
<dbReference type="Gene3D" id="3.30.420.40">
    <property type="match status" value="1"/>
</dbReference>
<dbReference type="Gene3D" id="3.30.420.150">
    <property type="entry name" value="Exopolyphosphatase. Domain 2"/>
    <property type="match status" value="1"/>
</dbReference>
<dbReference type="InterPro" id="IPR000407">
    <property type="entry name" value="GDA1_CD39_NTPase"/>
</dbReference>
<dbReference type="PANTHER" id="PTHR11782">
    <property type="entry name" value="ADENOSINE/GUANOSINE DIPHOSPHATASE"/>
    <property type="match status" value="1"/>
</dbReference>
<dbReference type="PANTHER" id="PTHR11782:SF31">
    <property type="entry name" value="ECTONUCLEOSIDE TRIPHOSPHATE DIPHOSPHOHYDROLASE 8"/>
    <property type="match status" value="1"/>
</dbReference>
<dbReference type="Pfam" id="PF01150">
    <property type="entry name" value="GDA1_CD39"/>
    <property type="match status" value="1"/>
</dbReference>
<dbReference type="PROSITE" id="PS01238">
    <property type="entry name" value="GDA1_CD39_NTPASE"/>
    <property type="match status" value="1"/>
</dbReference>
<accession>O93295</accession>
<accession>Q90X66</accession>
<proteinExistence type="evidence at protein level"/>
<reference key="1">
    <citation type="journal article" date="1998" name="J. Biol. Chem.">
        <title>Molecular cloning of the chicken oviduct ecto-ATP-diphosphohydrolase.</title>
        <authorList>
            <person name="Nagy A.K."/>
            <person name="Knowles A.F."/>
            <person name="Nagami G.T."/>
        </authorList>
    </citation>
    <scope>NUCLEOTIDE SEQUENCE [MRNA]</scope>
    <scope>PROTEIN SEQUENCE OF 1-21 AND 150-156</scope>
    <source>
        <tissue>Oviduct</tissue>
    </source>
</reference>
<reference key="2">
    <citation type="journal article" date="2002" name="Eur. J. Biochem.">
        <title>Purification, characterization, cloning, and expression of the chicken liver ecto-ATP-diphosphohydrolase.</title>
        <authorList>
            <person name="Knowles A.F."/>
            <person name="Nagy A.K."/>
            <person name="Strobel R.S."/>
            <person name="Wu-Weis M."/>
        </authorList>
    </citation>
    <scope>NUCLEOTIDE SEQUENCE [MRNA]</scope>
    <scope>FUNCTION</scope>
    <scope>ENZYME ACTIVITY</scope>
    <scope>BIOPHYSICOCHEMICAL PROPERTIES</scope>
    <scope>SUBCELLULAR LOCATION</scope>
    <source>
        <tissue>Liver</tissue>
    </source>
</reference>
<reference key="3">
    <citation type="journal article" date="1997" name="J. Biol. Chem.">
        <title>Immunolocalization of the ecto-ATPase and ecto-apyrase in chicken gizzard and stomach. Purification and N-terminal sequence of the stomach ecto-apyrase.</title>
        <authorList>
            <person name="Lewis-Carl S."/>
            <person name="Kirley T.L."/>
        </authorList>
    </citation>
    <scope>PROTEIN SEQUENCE OF 1-17</scope>
    <source>
        <tissue>Stomach</tissue>
    </source>
</reference>
<reference key="4">
    <citation type="journal article" date="2005" name="Biochemistry">
        <title>Either the carboxyl- or the amino-terminal region of the human ecto-ATPase (E-NTPDase 2) confers detergent and temperature sensitivity to the chicken ecto-ATP-diphosphohydrolase (E-NTPDase 8).</title>
        <authorList>
            <person name="Mukasa T."/>
            <person name="Lee Y."/>
            <person name="Knowles A.F."/>
        </authorList>
    </citation>
    <scope>FUNCTION</scope>
</reference>